<dbReference type="EC" id="2.8.1.8" evidence="1"/>
<dbReference type="EMBL" id="KN275963">
    <property type="protein sequence ID" value="EEH49980.1"/>
    <property type="molecule type" value="Genomic_DNA"/>
</dbReference>
<dbReference type="RefSeq" id="XP_010761520.1">
    <property type="nucleotide sequence ID" value="XM_010763218.1"/>
</dbReference>
<dbReference type="SMR" id="C1GFM3"/>
<dbReference type="FunCoup" id="C1GFM3">
    <property type="interactions" value="552"/>
</dbReference>
<dbReference type="STRING" id="502780.C1GFM3"/>
<dbReference type="GeneID" id="22584868"/>
<dbReference type="KEGG" id="pbn:PADG_06059"/>
<dbReference type="VEuPathDB" id="FungiDB:PADG_06059"/>
<dbReference type="eggNOG" id="KOG2672">
    <property type="taxonomic scope" value="Eukaryota"/>
</dbReference>
<dbReference type="HOGENOM" id="CLU_033144_0_0_1"/>
<dbReference type="InParanoid" id="C1GFM3"/>
<dbReference type="OMA" id="PYCDIDF"/>
<dbReference type="OrthoDB" id="12729at33183"/>
<dbReference type="UniPathway" id="UPA00538">
    <property type="reaction ID" value="UER00593"/>
</dbReference>
<dbReference type="Proteomes" id="UP000001628">
    <property type="component" value="Unassembled WGS sequence"/>
</dbReference>
<dbReference type="GO" id="GO:0005739">
    <property type="term" value="C:mitochondrion"/>
    <property type="evidence" value="ECO:0007669"/>
    <property type="project" value="UniProtKB-SubCell"/>
</dbReference>
<dbReference type="GO" id="GO:0051539">
    <property type="term" value="F:4 iron, 4 sulfur cluster binding"/>
    <property type="evidence" value="ECO:0007669"/>
    <property type="project" value="UniProtKB-UniRule"/>
</dbReference>
<dbReference type="GO" id="GO:0016992">
    <property type="term" value="F:lipoate synthase activity"/>
    <property type="evidence" value="ECO:0007669"/>
    <property type="project" value="UniProtKB-UniRule"/>
</dbReference>
<dbReference type="GO" id="GO:0046872">
    <property type="term" value="F:metal ion binding"/>
    <property type="evidence" value="ECO:0007669"/>
    <property type="project" value="UniProtKB-KW"/>
</dbReference>
<dbReference type="CDD" id="cd01335">
    <property type="entry name" value="Radical_SAM"/>
    <property type="match status" value="1"/>
</dbReference>
<dbReference type="FunFam" id="3.20.20.70:FF:000036">
    <property type="entry name" value="Lipoyl synthase, mitochondrial"/>
    <property type="match status" value="1"/>
</dbReference>
<dbReference type="Gene3D" id="3.20.20.70">
    <property type="entry name" value="Aldolase class I"/>
    <property type="match status" value="1"/>
</dbReference>
<dbReference type="HAMAP" id="MF_00206">
    <property type="entry name" value="Lipoyl_synth"/>
    <property type="match status" value="1"/>
</dbReference>
<dbReference type="InterPro" id="IPR013785">
    <property type="entry name" value="Aldolase_TIM"/>
</dbReference>
<dbReference type="InterPro" id="IPR006638">
    <property type="entry name" value="Elp3/MiaA/NifB-like_rSAM"/>
</dbReference>
<dbReference type="InterPro" id="IPR031691">
    <property type="entry name" value="LIAS_N"/>
</dbReference>
<dbReference type="InterPro" id="IPR003698">
    <property type="entry name" value="Lipoyl_synth"/>
</dbReference>
<dbReference type="InterPro" id="IPR007197">
    <property type="entry name" value="rSAM"/>
</dbReference>
<dbReference type="NCBIfam" id="TIGR00510">
    <property type="entry name" value="lipA"/>
    <property type="match status" value="1"/>
</dbReference>
<dbReference type="NCBIfam" id="NF004019">
    <property type="entry name" value="PRK05481.1"/>
    <property type="match status" value="1"/>
</dbReference>
<dbReference type="NCBIfam" id="NF009544">
    <property type="entry name" value="PRK12928.1"/>
    <property type="match status" value="1"/>
</dbReference>
<dbReference type="PANTHER" id="PTHR10949">
    <property type="entry name" value="LIPOYL SYNTHASE"/>
    <property type="match status" value="1"/>
</dbReference>
<dbReference type="PANTHER" id="PTHR10949:SF0">
    <property type="entry name" value="LIPOYL SYNTHASE, MITOCHONDRIAL"/>
    <property type="match status" value="1"/>
</dbReference>
<dbReference type="Pfam" id="PF16881">
    <property type="entry name" value="LIAS_N"/>
    <property type="match status" value="1"/>
</dbReference>
<dbReference type="Pfam" id="PF04055">
    <property type="entry name" value="Radical_SAM"/>
    <property type="match status" value="1"/>
</dbReference>
<dbReference type="SFLD" id="SFLDF00271">
    <property type="entry name" value="lipoyl_synthase"/>
    <property type="match status" value="1"/>
</dbReference>
<dbReference type="SFLD" id="SFLDG01058">
    <property type="entry name" value="lipoyl_synthase_like"/>
    <property type="match status" value="1"/>
</dbReference>
<dbReference type="SMART" id="SM00729">
    <property type="entry name" value="Elp3"/>
    <property type="match status" value="1"/>
</dbReference>
<dbReference type="SUPFAM" id="SSF102114">
    <property type="entry name" value="Radical SAM enzymes"/>
    <property type="match status" value="1"/>
</dbReference>
<dbReference type="PROSITE" id="PS51918">
    <property type="entry name" value="RADICAL_SAM"/>
    <property type="match status" value="1"/>
</dbReference>
<name>LIPA_PARBD</name>
<organism>
    <name type="scientific">Paracoccidioides brasiliensis (strain Pb18)</name>
    <dbReference type="NCBI Taxonomy" id="502780"/>
    <lineage>
        <taxon>Eukaryota</taxon>
        <taxon>Fungi</taxon>
        <taxon>Dikarya</taxon>
        <taxon>Ascomycota</taxon>
        <taxon>Pezizomycotina</taxon>
        <taxon>Eurotiomycetes</taxon>
        <taxon>Eurotiomycetidae</taxon>
        <taxon>Onygenales</taxon>
        <taxon>Ajellomycetaceae</taxon>
        <taxon>Paracoccidioides</taxon>
    </lineage>
</organism>
<gene>
    <name type="ORF">PADG_06059</name>
</gene>
<proteinExistence type="inferred from homology"/>
<comment type="function">
    <text evidence="1">Catalyzes the radical-mediated insertion of two sulfur atoms into the C-6 and C-8 positions of the octanoyl moiety bound to the lipoyl domains of lipoate-dependent enzymes, thereby converting the octanoylated domains into lipoylated derivatives.</text>
</comment>
<comment type="catalytic activity">
    <reaction evidence="1">
        <text>[[Fe-S] cluster scaffold protein carrying a second [4Fe-4S](2+) cluster] + N(6)-octanoyl-L-lysyl-[protein] + 2 oxidized [2Fe-2S]-[ferredoxin] + 2 S-adenosyl-L-methionine + 4 H(+) = [[Fe-S] cluster scaffold protein] + N(6)-[(R)-dihydrolipoyl]-L-lysyl-[protein] + 4 Fe(3+) + 2 hydrogen sulfide + 2 5'-deoxyadenosine + 2 L-methionine + 2 reduced [2Fe-2S]-[ferredoxin]</text>
        <dbReference type="Rhea" id="RHEA:16585"/>
        <dbReference type="Rhea" id="RHEA-COMP:9928"/>
        <dbReference type="Rhea" id="RHEA-COMP:10000"/>
        <dbReference type="Rhea" id="RHEA-COMP:10001"/>
        <dbReference type="Rhea" id="RHEA-COMP:10475"/>
        <dbReference type="Rhea" id="RHEA-COMP:14568"/>
        <dbReference type="Rhea" id="RHEA-COMP:14569"/>
        <dbReference type="ChEBI" id="CHEBI:15378"/>
        <dbReference type="ChEBI" id="CHEBI:17319"/>
        <dbReference type="ChEBI" id="CHEBI:29034"/>
        <dbReference type="ChEBI" id="CHEBI:29919"/>
        <dbReference type="ChEBI" id="CHEBI:33722"/>
        <dbReference type="ChEBI" id="CHEBI:33737"/>
        <dbReference type="ChEBI" id="CHEBI:33738"/>
        <dbReference type="ChEBI" id="CHEBI:57844"/>
        <dbReference type="ChEBI" id="CHEBI:59789"/>
        <dbReference type="ChEBI" id="CHEBI:78809"/>
        <dbReference type="ChEBI" id="CHEBI:83100"/>
        <dbReference type="EC" id="2.8.1.8"/>
    </reaction>
</comment>
<comment type="cofactor">
    <cofactor evidence="1">
        <name>[4Fe-4S] cluster</name>
        <dbReference type="ChEBI" id="CHEBI:49883"/>
    </cofactor>
    <text evidence="1">Binds 2 [4Fe-4S] clusters per subunit. One cluster is coordinated with 3 cysteines and an exchangeable S-adenosyl-L-methionine.</text>
</comment>
<comment type="pathway">
    <text evidence="1">Protein modification; protein lipoylation via endogenous pathway; protein N(6)-(lipoyl)lysine from octanoyl-[acyl-carrier-protein]: step 2/2.</text>
</comment>
<comment type="subcellular location">
    <subcellularLocation>
        <location evidence="1">Mitochondrion</location>
    </subcellularLocation>
</comment>
<comment type="similarity">
    <text evidence="1">Belongs to the radical SAM superfamily. Lipoyl synthase family.</text>
</comment>
<sequence>MAASARGLRTLQSAHSSTTVPRLQLAVSRCYATTTSPDPPITNSSNSSNSSNSTPTPKQRITAFKDKLNAGPSFSDFVSGGGGGGASNDRVPLDPAEAYALKTALVGPPGRKKQIIRLPSWLKTPIPDTPNYRRIKSDLRGLNLHTVCEEARCPNISDCWGGSSKSAATATIMLMGDTCTRGCRFCSVKTSRTPPPLDPHEPENTAEALSRWGLGYVVMTSVDRDDLADGGARHVVETVRKVKQKAPGILLECLTGDYAGDLEMVALVATSGLDVFAHNVETVEALTPFVRDRRATFQQSLRVLKAAKEARPELITKTSIMLGLGETETQLWETLRALRAVDVDVVTFGQYMRPTKRHMAVHEYVRPEVFDLWKERALEMGFLYCASGPLVRSSYKAGEAFIENVLKKRRGEGADGGDGGNSTRREDVERLVAGGVVR</sequence>
<reference key="1">
    <citation type="journal article" date="2011" name="PLoS Genet.">
        <title>Comparative genomic analysis of human fungal pathogens causing paracoccidioidomycosis.</title>
        <authorList>
            <person name="Desjardins C.A."/>
            <person name="Champion M.D."/>
            <person name="Holder J.W."/>
            <person name="Muszewska A."/>
            <person name="Goldberg J."/>
            <person name="Bailao A.M."/>
            <person name="Brigido M.M."/>
            <person name="Ferreira M.E."/>
            <person name="Garcia A.M."/>
            <person name="Grynberg M."/>
            <person name="Gujja S."/>
            <person name="Heiman D.I."/>
            <person name="Henn M.R."/>
            <person name="Kodira C.D."/>
            <person name="Leon-Narvaez H."/>
            <person name="Longo L.V.G."/>
            <person name="Ma L.-J."/>
            <person name="Malavazi I."/>
            <person name="Matsuo A.L."/>
            <person name="Morais F.V."/>
            <person name="Pereira M."/>
            <person name="Rodriguez-Brito S."/>
            <person name="Sakthikumar S."/>
            <person name="Salem-Izacc S.M."/>
            <person name="Sykes S.M."/>
            <person name="Teixeira M.M."/>
            <person name="Vallejo M.C."/>
            <person name="Walter M.E."/>
            <person name="Yandava C."/>
            <person name="Young S."/>
            <person name="Zeng Q."/>
            <person name="Zucker J."/>
            <person name="Felipe M.S."/>
            <person name="Goldman G.H."/>
            <person name="Haas B.J."/>
            <person name="McEwen J.G."/>
            <person name="Nino-Vega G."/>
            <person name="Puccia R."/>
            <person name="San-Blas G."/>
            <person name="Soares C.M."/>
            <person name="Birren B.W."/>
            <person name="Cuomo C.A."/>
        </authorList>
    </citation>
    <scope>NUCLEOTIDE SEQUENCE [LARGE SCALE GENOMIC DNA]</scope>
    <source>
        <strain>Pb18</strain>
    </source>
</reference>
<evidence type="ECO:0000255" key="1">
    <source>
        <dbReference type="HAMAP-Rule" id="MF_03123"/>
    </source>
</evidence>
<evidence type="ECO:0000255" key="2">
    <source>
        <dbReference type="PROSITE-ProRule" id="PRU01266"/>
    </source>
</evidence>
<evidence type="ECO:0000256" key="3">
    <source>
        <dbReference type="SAM" id="MobiDB-lite"/>
    </source>
</evidence>
<protein>
    <recommendedName>
        <fullName evidence="1">Lipoyl synthase, mitochondrial</fullName>
        <ecNumber evidence="1">2.8.1.8</ecNumber>
    </recommendedName>
    <alternativeName>
        <fullName evidence="1">Lipoate synthase</fullName>
        <shortName evidence="1">LS</shortName>
        <shortName evidence="1">Lip-syn</shortName>
    </alternativeName>
    <alternativeName>
        <fullName evidence="1">Lipoic acid synthase</fullName>
    </alternativeName>
</protein>
<feature type="transit peptide" description="Mitochondrion" evidence="1">
    <location>
        <begin position="1"/>
        <end position="31"/>
    </location>
</feature>
<feature type="chain" id="PRO_0000398278" description="Lipoyl synthase, mitochondrial">
    <location>
        <begin position="32"/>
        <end position="438"/>
    </location>
</feature>
<feature type="domain" description="Radical SAM core" evidence="2">
    <location>
        <begin position="162"/>
        <end position="383"/>
    </location>
</feature>
<feature type="region of interest" description="Disordered" evidence="3">
    <location>
        <begin position="34"/>
        <end position="58"/>
    </location>
</feature>
<feature type="compositionally biased region" description="Low complexity" evidence="3">
    <location>
        <begin position="34"/>
        <end position="57"/>
    </location>
</feature>
<feature type="binding site" evidence="1">
    <location>
        <position position="148"/>
    </location>
    <ligand>
        <name>[4Fe-4S] cluster</name>
        <dbReference type="ChEBI" id="CHEBI:49883"/>
        <label>1</label>
    </ligand>
</feature>
<feature type="binding site" evidence="1">
    <location>
        <position position="153"/>
    </location>
    <ligand>
        <name>[4Fe-4S] cluster</name>
        <dbReference type="ChEBI" id="CHEBI:49883"/>
        <label>1</label>
    </ligand>
</feature>
<feature type="binding site" evidence="1">
    <location>
        <position position="159"/>
    </location>
    <ligand>
        <name>[4Fe-4S] cluster</name>
        <dbReference type="ChEBI" id="CHEBI:49883"/>
        <label>1</label>
    </ligand>
</feature>
<feature type="binding site" evidence="1">
    <location>
        <position position="179"/>
    </location>
    <ligand>
        <name>[4Fe-4S] cluster</name>
        <dbReference type="ChEBI" id="CHEBI:49883"/>
        <label>2</label>
        <note>4Fe-4S-S-AdoMet</note>
    </ligand>
</feature>
<feature type="binding site" evidence="1">
    <location>
        <position position="183"/>
    </location>
    <ligand>
        <name>[4Fe-4S] cluster</name>
        <dbReference type="ChEBI" id="CHEBI:49883"/>
        <label>2</label>
        <note>4Fe-4S-S-AdoMet</note>
    </ligand>
</feature>
<feature type="binding site" evidence="1">
    <location>
        <position position="186"/>
    </location>
    <ligand>
        <name>[4Fe-4S] cluster</name>
        <dbReference type="ChEBI" id="CHEBI:49883"/>
        <label>2</label>
        <note>4Fe-4S-S-AdoMet</note>
    </ligand>
</feature>
<feature type="binding site" evidence="1">
    <location>
        <position position="394"/>
    </location>
    <ligand>
        <name>[4Fe-4S] cluster</name>
        <dbReference type="ChEBI" id="CHEBI:49883"/>
        <label>1</label>
    </ligand>
</feature>
<accession>C1GFM3</accession>
<keyword id="KW-0004">4Fe-4S</keyword>
<keyword id="KW-0408">Iron</keyword>
<keyword id="KW-0411">Iron-sulfur</keyword>
<keyword id="KW-0479">Metal-binding</keyword>
<keyword id="KW-0496">Mitochondrion</keyword>
<keyword id="KW-1185">Reference proteome</keyword>
<keyword id="KW-0949">S-adenosyl-L-methionine</keyword>
<keyword id="KW-0808">Transferase</keyword>
<keyword id="KW-0809">Transit peptide</keyword>